<organism>
    <name type="scientific">Xanthomonas oryzae pv. oryzae (strain PXO99A)</name>
    <dbReference type="NCBI Taxonomy" id="360094"/>
    <lineage>
        <taxon>Bacteria</taxon>
        <taxon>Pseudomonadati</taxon>
        <taxon>Pseudomonadota</taxon>
        <taxon>Gammaproteobacteria</taxon>
        <taxon>Lysobacterales</taxon>
        <taxon>Lysobacteraceae</taxon>
        <taxon>Xanthomonas</taxon>
    </lineage>
</organism>
<name>RLMM_XANOP</name>
<gene>
    <name evidence="1" type="primary">rlmM</name>
    <name type="ordered locus">PXO_04620</name>
</gene>
<protein>
    <recommendedName>
        <fullName evidence="1">Ribosomal RNA large subunit methyltransferase M</fullName>
        <ecNumber evidence="1">2.1.1.186</ecNumber>
    </recommendedName>
    <alternativeName>
        <fullName evidence="1">23S rRNA (cytidine2498-2'-O)-methyltransferase</fullName>
    </alternativeName>
    <alternativeName>
        <fullName evidence="1">23S rRNA 2'-O-ribose methyltransferase RlmM</fullName>
    </alternativeName>
</protein>
<accession>B2SPV7</accession>
<dbReference type="EC" id="2.1.1.186" evidence="1"/>
<dbReference type="EMBL" id="CP000967">
    <property type="protein sequence ID" value="ACD57794.1"/>
    <property type="molecule type" value="Genomic_DNA"/>
</dbReference>
<dbReference type="RefSeq" id="WP_012444248.1">
    <property type="nucleotide sequence ID" value="NC_010717.2"/>
</dbReference>
<dbReference type="SMR" id="B2SPV7"/>
<dbReference type="KEGG" id="xop:PXO_04620"/>
<dbReference type="eggNOG" id="COG2933">
    <property type="taxonomic scope" value="Bacteria"/>
</dbReference>
<dbReference type="HOGENOM" id="CLU_043780_0_0_6"/>
<dbReference type="Proteomes" id="UP000001740">
    <property type="component" value="Chromosome"/>
</dbReference>
<dbReference type="GO" id="GO:0005737">
    <property type="term" value="C:cytoplasm"/>
    <property type="evidence" value="ECO:0007669"/>
    <property type="project" value="UniProtKB-SubCell"/>
</dbReference>
<dbReference type="GO" id="GO:0008757">
    <property type="term" value="F:S-adenosylmethionine-dependent methyltransferase activity"/>
    <property type="evidence" value="ECO:0007669"/>
    <property type="project" value="UniProtKB-UniRule"/>
</dbReference>
<dbReference type="GO" id="GO:0032259">
    <property type="term" value="P:methylation"/>
    <property type="evidence" value="ECO:0007669"/>
    <property type="project" value="UniProtKB-KW"/>
</dbReference>
<dbReference type="GO" id="GO:0006364">
    <property type="term" value="P:rRNA processing"/>
    <property type="evidence" value="ECO:0007669"/>
    <property type="project" value="UniProtKB-UniRule"/>
</dbReference>
<dbReference type="Gene3D" id="3.30.2300.20">
    <property type="match status" value="1"/>
</dbReference>
<dbReference type="Gene3D" id="3.30.70.2810">
    <property type="match status" value="1"/>
</dbReference>
<dbReference type="Gene3D" id="3.40.50.150">
    <property type="entry name" value="Vaccinia Virus protein VP39"/>
    <property type="match status" value="1"/>
</dbReference>
<dbReference type="HAMAP" id="MF_01551">
    <property type="entry name" value="23SrRNA_methyltr_M"/>
    <property type="match status" value="1"/>
</dbReference>
<dbReference type="InterPro" id="IPR040739">
    <property type="entry name" value="RlmM_FDX"/>
</dbReference>
<dbReference type="InterPro" id="IPR048646">
    <property type="entry name" value="RlmM_THUMP-like"/>
</dbReference>
<dbReference type="InterPro" id="IPR002877">
    <property type="entry name" value="RNA_MeTrfase_FtsJ_dom"/>
</dbReference>
<dbReference type="InterPro" id="IPR011224">
    <property type="entry name" value="rRNA_MeTrfase_M"/>
</dbReference>
<dbReference type="InterPro" id="IPR029063">
    <property type="entry name" value="SAM-dependent_MTases_sf"/>
</dbReference>
<dbReference type="NCBIfam" id="NF008734">
    <property type="entry name" value="PRK11760.1"/>
    <property type="match status" value="1"/>
</dbReference>
<dbReference type="PANTHER" id="PTHR37524">
    <property type="entry name" value="RIBOSOMAL RNA LARGE SUBUNIT METHYLTRANSFERASE M"/>
    <property type="match status" value="1"/>
</dbReference>
<dbReference type="PANTHER" id="PTHR37524:SF2">
    <property type="entry name" value="RIBOSOMAL RNA METHYLTRANSFERASE FTSJ DOMAIN-CONTAINING PROTEIN"/>
    <property type="match status" value="1"/>
</dbReference>
<dbReference type="Pfam" id="PF01728">
    <property type="entry name" value="FtsJ"/>
    <property type="match status" value="1"/>
</dbReference>
<dbReference type="Pfam" id="PF18125">
    <property type="entry name" value="RlmM_FDX"/>
    <property type="match status" value="1"/>
</dbReference>
<dbReference type="Pfam" id="PF21239">
    <property type="entry name" value="RLMM_N"/>
    <property type="match status" value="1"/>
</dbReference>
<dbReference type="PIRSF" id="PIRSF028774">
    <property type="entry name" value="UCP028774"/>
    <property type="match status" value="1"/>
</dbReference>
<dbReference type="SUPFAM" id="SSF53335">
    <property type="entry name" value="S-adenosyl-L-methionine-dependent methyltransferases"/>
    <property type="match status" value="1"/>
</dbReference>
<keyword id="KW-0963">Cytoplasm</keyword>
<keyword id="KW-0489">Methyltransferase</keyword>
<keyword id="KW-0698">rRNA processing</keyword>
<keyword id="KW-0949">S-adenosyl-L-methionine</keyword>
<keyword id="KW-0808">Transferase</keyword>
<proteinExistence type="inferred from homology"/>
<reference key="1">
    <citation type="journal article" date="2008" name="BMC Genomics">
        <title>Genome sequence and rapid evolution of the rice pathogen Xanthomonas oryzae pv. oryzae PXO99A.</title>
        <authorList>
            <person name="Salzberg S.L."/>
            <person name="Sommer D.D."/>
            <person name="Schatz M.C."/>
            <person name="Phillippy A.M."/>
            <person name="Rabinowicz P.D."/>
            <person name="Tsuge S."/>
            <person name="Furutani A."/>
            <person name="Ochiai H."/>
            <person name="Delcher A.L."/>
            <person name="Kelley D."/>
            <person name="Madupu R."/>
            <person name="Puiu D."/>
            <person name="Radune D."/>
            <person name="Shumway M."/>
            <person name="Trapnell C."/>
            <person name="Aparna G."/>
            <person name="Jha G."/>
            <person name="Pandey A."/>
            <person name="Patil P.B."/>
            <person name="Ishihara H."/>
            <person name="Meyer D.F."/>
            <person name="Szurek B."/>
            <person name="Verdier V."/>
            <person name="Koebnik R."/>
            <person name="Dow J.M."/>
            <person name="Ryan R.P."/>
            <person name="Hirata H."/>
            <person name="Tsuyumu S."/>
            <person name="Won Lee S."/>
            <person name="Seo Y.-S."/>
            <person name="Sriariyanum M."/>
            <person name="Ronald P.C."/>
            <person name="Sonti R.V."/>
            <person name="Van Sluys M.-A."/>
            <person name="Leach J.E."/>
            <person name="White F.F."/>
            <person name="Bogdanove A.J."/>
        </authorList>
    </citation>
    <scope>NUCLEOTIDE SEQUENCE [LARGE SCALE GENOMIC DNA]</scope>
    <source>
        <strain>PXO99A</strain>
    </source>
</reference>
<feature type="chain" id="PRO_1000201537" description="Ribosomal RNA large subunit methyltransferase M">
    <location>
        <begin position="1"/>
        <end position="347"/>
    </location>
</feature>
<feature type="active site" description="Proton acceptor" evidence="1">
    <location>
        <position position="301"/>
    </location>
</feature>
<feature type="binding site" evidence="1">
    <location>
        <position position="184"/>
    </location>
    <ligand>
        <name>S-adenosyl-L-methionine</name>
        <dbReference type="ChEBI" id="CHEBI:59789"/>
    </ligand>
</feature>
<feature type="binding site" evidence="1">
    <location>
        <begin position="217"/>
        <end position="220"/>
    </location>
    <ligand>
        <name>S-adenosyl-L-methionine</name>
        <dbReference type="ChEBI" id="CHEBI:59789"/>
    </ligand>
</feature>
<feature type="binding site" evidence="1">
    <location>
        <position position="236"/>
    </location>
    <ligand>
        <name>S-adenosyl-L-methionine</name>
        <dbReference type="ChEBI" id="CHEBI:59789"/>
    </ligand>
</feature>
<feature type="binding site" evidence="1">
    <location>
        <position position="256"/>
    </location>
    <ligand>
        <name>S-adenosyl-L-methionine</name>
        <dbReference type="ChEBI" id="CHEBI:59789"/>
    </ligand>
</feature>
<feature type="binding site" evidence="1">
    <location>
        <position position="272"/>
    </location>
    <ligand>
        <name>S-adenosyl-L-methionine</name>
        <dbReference type="ChEBI" id="CHEBI:59789"/>
    </ligand>
</feature>
<sequence>MSGLLCYCRQGFEPELAAELSARAAFVGIAGYARTQRNDGYVLFVCDEAAQLAAKLQWRELIFARQKLVVIAELKGIDPKDRITPILAALEGQQRFGDLWVEHPDSDAGKPLASLARSFGNALRPALRKAGLLTDKPQPRQPRLHICFLDGDHALLAVADSADSAPWPLGIPRLKLLPEAPSRSALKLDEALLTLLTPEEREALVKPGMRAADLGAAPGGWTWVLTRQHVHVTSVDNGPLRAHVLETGLVEHLRADGFHWKPAQPVDWMVCDMVEQPRRVAERMATWVREGWCRNTIFNLKLPMKKRWDETRLCLELFEQQAEKSLIVRAKQLYHDREEITVLAMRG</sequence>
<evidence type="ECO:0000255" key="1">
    <source>
        <dbReference type="HAMAP-Rule" id="MF_01551"/>
    </source>
</evidence>
<comment type="function">
    <text evidence="1">Catalyzes the 2'-O-methylation at nucleotide C2498 in 23S rRNA.</text>
</comment>
<comment type="catalytic activity">
    <reaction evidence="1">
        <text>cytidine(2498) in 23S rRNA + S-adenosyl-L-methionine = 2'-O-methylcytidine(2498) in 23S rRNA + S-adenosyl-L-homocysteine + H(+)</text>
        <dbReference type="Rhea" id="RHEA:42788"/>
        <dbReference type="Rhea" id="RHEA-COMP:10244"/>
        <dbReference type="Rhea" id="RHEA-COMP:10245"/>
        <dbReference type="ChEBI" id="CHEBI:15378"/>
        <dbReference type="ChEBI" id="CHEBI:57856"/>
        <dbReference type="ChEBI" id="CHEBI:59789"/>
        <dbReference type="ChEBI" id="CHEBI:74495"/>
        <dbReference type="ChEBI" id="CHEBI:82748"/>
        <dbReference type="EC" id="2.1.1.186"/>
    </reaction>
</comment>
<comment type="subunit">
    <text evidence="1">Monomer.</text>
</comment>
<comment type="subcellular location">
    <subcellularLocation>
        <location evidence="1">Cytoplasm</location>
    </subcellularLocation>
</comment>
<comment type="similarity">
    <text evidence="1">Belongs to the class I-like SAM-binding methyltransferase superfamily. RNA methyltransferase RlmE family. RlmM subfamily.</text>
</comment>